<evidence type="ECO:0000250" key="1"/>
<evidence type="ECO:0000255" key="2"/>
<evidence type="ECO:0000305" key="3"/>
<dbReference type="EMBL" id="AY261363">
    <property type="status" value="NOT_ANNOTATED_CDS"/>
    <property type="molecule type" value="Genomic_DNA"/>
</dbReference>
<dbReference type="Proteomes" id="UP000000859">
    <property type="component" value="Segment"/>
</dbReference>
<dbReference type="GO" id="GO:0033644">
    <property type="term" value="C:host cell membrane"/>
    <property type="evidence" value="ECO:0007669"/>
    <property type="project" value="UniProtKB-SubCell"/>
</dbReference>
<dbReference type="GO" id="GO:0016020">
    <property type="term" value="C:membrane"/>
    <property type="evidence" value="ECO:0007669"/>
    <property type="project" value="UniProtKB-KW"/>
</dbReference>
<dbReference type="InterPro" id="IPR004848">
    <property type="entry name" value="ASFV_fam_110"/>
</dbReference>
<dbReference type="Pfam" id="PF01639">
    <property type="entry name" value="v110"/>
    <property type="match status" value="2"/>
</dbReference>
<keyword id="KW-0325">Glycoprotein</keyword>
<keyword id="KW-1043">Host membrane</keyword>
<keyword id="KW-0472">Membrane</keyword>
<keyword id="KW-0812">Transmembrane</keyword>
<keyword id="KW-1133">Transmembrane helix</keyword>
<reference key="1">
    <citation type="submission" date="2003-03" db="EMBL/GenBank/DDBJ databases">
        <title>African swine fever virus genomes.</title>
        <authorList>
            <person name="Kutish G.F."/>
            <person name="Rock D.L."/>
        </authorList>
    </citation>
    <scope>NUCLEOTIDE SEQUENCE [LARGE SCALE GENOMIC DNA]</scope>
</reference>
<organismHost>
    <name type="scientific">Ornithodoros</name>
    <name type="common">relapsing fever ticks</name>
    <dbReference type="NCBI Taxonomy" id="6937"/>
</organismHost>
<organismHost>
    <name type="scientific">Phacochoerus aethiopicus</name>
    <name type="common">Warthog</name>
    <dbReference type="NCBI Taxonomy" id="85517"/>
</organismHost>
<organismHost>
    <name type="scientific">Phacochoerus africanus</name>
    <name type="common">Warthog</name>
    <dbReference type="NCBI Taxonomy" id="41426"/>
</organismHost>
<organismHost>
    <name type="scientific">Potamochoerus larvatus</name>
    <name type="common">Bushpig</name>
    <dbReference type="NCBI Taxonomy" id="273792"/>
</organismHost>
<organismHost>
    <name type="scientific">Sus scrofa</name>
    <name type="common">Pig</name>
    <dbReference type="NCBI Taxonomy" id="9823"/>
</organismHost>
<protein>
    <recommendedName>
        <fullName>Protein MGF 110-9L</fullName>
    </recommendedName>
</protein>
<feature type="chain" id="PRO_0000373213" description="Protein MGF 110-9L">
    <location>
        <begin position="1"/>
        <end position="290"/>
    </location>
</feature>
<feature type="transmembrane region" description="Helical" evidence="2">
    <location>
        <begin position="1"/>
        <end position="19"/>
    </location>
</feature>
<feature type="transmembrane region" description="Helical" evidence="2">
    <location>
        <begin position="128"/>
        <end position="148"/>
    </location>
</feature>
<feature type="transmembrane region" description="Helical" evidence="2">
    <location>
        <begin position="163"/>
        <end position="183"/>
    </location>
</feature>
<feature type="glycosylation site" description="N-linked (GlcNAc...) asparagine; by host" evidence="2">
    <location>
        <position position="242"/>
    </location>
</feature>
<feature type="glycosylation site" description="N-linked (GlcNAc...) asparagine; by host" evidence="2">
    <location>
        <position position="267"/>
    </location>
</feature>
<accession>P0C9J1</accession>
<proteinExistence type="inferred from homology"/>
<gene>
    <name type="ordered locus">Pret-021</name>
</gene>
<sequence>MKVIVLLLVLAVMQPVIQSQPFPGTGELPMTRRPPKKELEYWCTYAKSCDFCWNCRHGVCKNKVFEKHPLIKKNDYIQICRVSRYNERCSYFTDTRIRRFHIMSCTNPTYYDWFDELMQVKEDRVIDTENIKHTCLCMIATIALIGYIRKQYSRMQLQAATRLLIFLGLYVLLGILMTNIIMNLPLSTDNPMQMRRPPERDLKFWCTYAKHCDFCWTCKDGMCKNKVFSDHPIITQNDYIVNCTVSRWHDRCMYEAHFRIHYQHNMNCSQPKDLEWFIELKRHVINQDDL</sequence>
<organism>
    <name type="scientific">African swine fever virus (isolate Tick/South Africa/Pretoriuskop Pr4/1996)</name>
    <name type="common">ASFV</name>
    <dbReference type="NCBI Taxonomy" id="561443"/>
    <lineage>
        <taxon>Viruses</taxon>
        <taxon>Varidnaviria</taxon>
        <taxon>Bamfordvirae</taxon>
        <taxon>Nucleocytoviricota</taxon>
        <taxon>Pokkesviricetes</taxon>
        <taxon>Asfuvirales</taxon>
        <taxon>Asfarviridae</taxon>
        <taxon>Asfivirus</taxon>
        <taxon>African swine fever virus</taxon>
    </lineage>
</organism>
<comment type="function">
    <text evidence="1">Plays a role in virus cell tropism, and may be required for efficient virus replication in macrophages.</text>
</comment>
<comment type="subcellular location">
    <subcellularLocation>
        <location evidence="3">Host membrane</location>
        <topology evidence="3">Multi-pass membrane protein</topology>
    </subcellularLocation>
</comment>
<comment type="similarity">
    <text evidence="3">Belongs to the asfivirus MGF 110 family.</text>
</comment>
<name>1109L_ASFP4</name>